<organism>
    <name type="scientific">Homo sapiens</name>
    <name type="common">Human</name>
    <dbReference type="NCBI Taxonomy" id="9606"/>
    <lineage>
        <taxon>Eukaryota</taxon>
        <taxon>Metazoa</taxon>
        <taxon>Chordata</taxon>
        <taxon>Craniata</taxon>
        <taxon>Vertebrata</taxon>
        <taxon>Euteleostomi</taxon>
        <taxon>Mammalia</taxon>
        <taxon>Eutheria</taxon>
        <taxon>Euarchontoglires</taxon>
        <taxon>Primates</taxon>
        <taxon>Haplorrhini</taxon>
        <taxon>Catarrhini</taxon>
        <taxon>Hominidae</taxon>
        <taxon>Homo</taxon>
    </lineage>
</organism>
<reference key="1">
    <citation type="journal article" date="2007" name="Biochim. Biophys. Acta">
        <title>LSDP5 is a PAT protein specifically expressed in fatty acid oxidizing tissues.</title>
        <authorList>
            <person name="Dalen K.T."/>
            <person name="Dahl T."/>
            <person name="Holter E."/>
            <person name="Arntsen B."/>
            <person name="Londos C."/>
            <person name="Sztalryd C."/>
            <person name="Nebb H.I."/>
        </authorList>
    </citation>
    <scope>NUCLEOTIDE SEQUENCE [MRNA]</scope>
    <scope>FUNCTION</scope>
    <scope>TISSUE SPECIFICITY</scope>
    <scope>SUBCELLULAR LOCATION</scope>
    <scope>VARIANTS ARG-255 AND TRP-306</scope>
    <source>
        <tissue>Heart</tissue>
    </source>
</reference>
<reference key="2">
    <citation type="journal article" date="2004" name="Nature">
        <title>The DNA sequence and biology of human chromosome 19.</title>
        <authorList>
            <person name="Grimwood J."/>
            <person name="Gordon L.A."/>
            <person name="Olsen A.S."/>
            <person name="Terry A."/>
            <person name="Schmutz J."/>
            <person name="Lamerdin J.E."/>
            <person name="Hellsten U."/>
            <person name="Goodstein D."/>
            <person name="Couronne O."/>
            <person name="Tran-Gyamfi M."/>
            <person name="Aerts A."/>
            <person name="Altherr M."/>
            <person name="Ashworth L."/>
            <person name="Bajorek E."/>
            <person name="Black S."/>
            <person name="Branscomb E."/>
            <person name="Caenepeel S."/>
            <person name="Carrano A.V."/>
            <person name="Caoile C."/>
            <person name="Chan Y.M."/>
            <person name="Christensen M."/>
            <person name="Cleland C.A."/>
            <person name="Copeland A."/>
            <person name="Dalin E."/>
            <person name="Dehal P."/>
            <person name="Denys M."/>
            <person name="Detter J.C."/>
            <person name="Escobar J."/>
            <person name="Flowers D."/>
            <person name="Fotopulos D."/>
            <person name="Garcia C."/>
            <person name="Georgescu A.M."/>
            <person name="Glavina T."/>
            <person name="Gomez M."/>
            <person name="Gonzales E."/>
            <person name="Groza M."/>
            <person name="Hammon N."/>
            <person name="Hawkins T."/>
            <person name="Haydu L."/>
            <person name="Ho I."/>
            <person name="Huang W."/>
            <person name="Israni S."/>
            <person name="Jett J."/>
            <person name="Kadner K."/>
            <person name="Kimball H."/>
            <person name="Kobayashi A."/>
            <person name="Larionov V."/>
            <person name="Leem S.-H."/>
            <person name="Lopez F."/>
            <person name="Lou Y."/>
            <person name="Lowry S."/>
            <person name="Malfatti S."/>
            <person name="Martinez D."/>
            <person name="McCready P.M."/>
            <person name="Medina C."/>
            <person name="Morgan J."/>
            <person name="Nelson K."/>
            <person name="Nolan M."/>
            <person name="Ovcharenko I."/>
            <person name="Pitluck S."/>
            <person name="Pollard M."/>
            <person name="Popkie A.P."/>
            <person name="Predki P."/>
            <person name="Quan G."/>
            <person name="Ramirez L."/>
            <person name="Rash S."/>
            <person name="Retterer J."/>
            <person name="Rodriguez A."/>
            <person name="Rogers S."/>
            <person name="Salamov A."/>
            <person name="Salazar A."/>
            <person name="She X."/>
            <person name="Smith D."/>
            <person name="Slezak T."/>
            <person name="Solovyev V."/>
            <person name="Thayer N."/>
            <person name="Tice H."/>
            <person name="Tsai M."/>
            <person name="Ustaszewska A."/>
            <person name="Vo N."/>
            <person name="Wagner M."/>
            <person name="Wheeler J."/>
            <person name="Wu K."/>
            <person name="Xie G."/>
            <person name="Yang J."/>
            <person name="Dubchak I."/>
            <person name="Furey T.S."/>
            <person name="DeJong P."/>
            <person name="Dickson M."/>
            <person name="Gordon D."/>
            <person name="Eichler E.E."/>
            <person name="Pennacchio L.A."/>
            <person name="Richardson P."/>
            <person name="Stubbs L."/>
            <person name="Rokhsar D.S."/>
            <person name="Myers R.M."/>
            <person name="Rubin E.M."/>
            <person name="Lucas S.M."/>
        </authorList>
    </citation>
    <scope>NUCLEOTIDE SEQUENCE [LARGE SCALE GENOMIC DNA]</scope>
</reference>
<reference key="3">
    <citation type="journal article" date="2004" name="Genome Res.">
        <title>The status, quality, and expansion of the NIH full-length cDNA project: the Mammalian Gene Collection (MGC).</title>
        <authorList>
            <consortium name="The MGC Project Team"/>
        </authorList>
    </citation>
    <scope>NUCLEOTIDE SEQUENCE [LARGE SCALE MRNA]</scope>
    <scope>VARIANT ARG-255</scope>
</reference>
<reference key="4">
    <citation type="journal article" date="2004" name="Nat. Genet.">
        <title>Complete sequencing and characterization of 21,243 full-length human cDNAs.</title>
        <authorList>
            <person name="Ota T."/>
            <person name="Suzuki Y."/>
            <person name="Nishikawa T."/>
            <person name="Otsuki T."/>
            <person name="Sugiyama T."/>
            <person name="Irie R."/>
            <person name="Wakamatsu A."/>
            <person name="Hayashi K."/>
            <person name="Sato H."/>
            <person name="Nagai K."/>
            <person name="Kimura K."/>
            <person name="Makita H."/>
            <person name="Sekine M."/>
            <person name="Obayashi M."/>
            <person name="Nishi T."/>
            <person name="Shibahara T."/>
            <person name="Tanaka T."/>
            <person name="Ishii S."/>
            <person name="Yamamoto J."/>
            <person name="Saito K."/>
            <person name="Kawai Y."/>
            <person name="Isono Y."/>
            <person name="Nakamura Y."/>
            <person name="Nagahari K."/>
            <person name="Murakami K."/>
            <person name="Yasuda T."/>
            <person name="Iwayanagi T."/>
            <person name="Wagatsuma M."/>
            <person name="Shiratori A."/>
            <person name="Sudo H."/>
            <person name="Hosoiri T."/>
            <person name="Kaku Y."/>
            <person name="Kodaira H."/>
            <person name="Kondo H."/>
            <person name="Sugawara M."/>
            <person name="Takahashi M."/>
            <person name="Kanda K."/>
            <person name="Yokoi T."/>
            <person name="Furuya T."/>
            <person name="Kikkawa E."/>
            <person name="Omura Y."/>
            <person name="Abe K."/>
            <person name="Kamihara K."/>
            <person name="Katsuta N."/>
            <person name="Sato K."/>
            <person name="Tanikawa M."/>
            <person name="Yamazaki M."/>
            <person name="Ninomiya K."/>
            <person name="Ishibashi T."/>
            <person name="Yamashita H."/>
            <person name="Murakawa K."/>
            <person name="Fujimori K."/>
            <person name="Tanai H."/>
            <person name="Kimata M."/>
            <person name="Watanabe M."/>
            <person name="Hiraoka S."/>
            <person name="Chiba Y."/>
            <person name="Ishida S."/>
            <person name="Ono Y."/>
            <person name="Takiguchi S."/>
            <person name="Watanabe S."/>
            <person name="Yosida M."/>
            <person name="Hotuta T."/>
            <person name="Kusano J."/>
            <person name="Kanehori K."/>
            <person name="Takahashi-Fujii A."/>
            <person name="Hara H."/>
            <person name="Tanase T.-O."/>
            <person name="Nomura Y."/>
            <person name="Togiya S."/>
            <person name="Komai F."/>
            <person name="Hara R."/>
            <person name="Takeuchi K."/>
            <person name="Arita M."/>
            <person name="Imose N."/>
            <person name="Musashino K."/>
            <person name="Yuuki H."/>
            <person name="Oshima A."/>
            <person name="Sasaki N."/>
            <person name="Aotsuka S."/>
            <person name="Yoshikawa Y."/>
            <person name="Matsunawa H."/>
            <person name="Ichihara T."/>
            <person name="Shiohata N."/>
            <person name="Sano S."/>
            <person name="Moriya S."/>
            <person name="Momiyama H."/>
            <person name="Satoh N."/>
            <person name="Takami S."/>
            <person name="Terashima Y."/>
            <person name="Suzuki O."/>
            <person name="Nakagawa S."/>
            <person name="Senoh A."/>
            <person name="Mizoguchi H."/>
            <person name="Goto Y."/>
            <person name="Shimizu F."/>
            <person name="Wakebe H."/>
            <person name="Hishigaki H."/>
            <person name="Watanabe T."/>
            <person name="Sugiyama A."/>
            <person name="Takemoto M."/>
            <person name="Kawakami B."/>
            <person name="Yamazaki M."/>
            <person name="Watanabe K."/>
            <person name="Kumagai A."/>
            <person name="Itakura S."/>
            <person name="Fukuzumi Y."/>
            <person name="Fujimori Y."/>
            <person name="Komiyama M."/>
            <person name="Tashiro H."/>
            <person name="Tanigami A."/>
            <person name="Fujiwara T."/>
            <person name="Ono T."/>
            <person name="Yamada K."/>
            <person name="Fujii Y."/>
            <person name="Ozaki K."/>
            <person name="Hirao M."/>
            <person name="Ohmori Y."/>
            <person name="Kawabata A."/>
            <person name="Hikiji T."/>
            <person name="Kobatake N."/>
            <person name="Inagaki H."/>
            <person name="Ikema Y."/>
            <person name="Okamoto S."/>
            <person name="Okitani R."/>
            <person name="Kawakami T."/>
            <person name="Noguchi S."/>
            <person name="Itoh T."/>
            <person name="Shigeta K."/>
            <person name="Senba T."/>
            <person name="Matsumura K."/>
            <person name="Nakajima Y."/>
            <person name="Mizuno T."/>
            <person name="Morinaga M."/>
            <person name="Sasaki M."/>
            <person name="Togashi T."/>
            <person name="Oyama M."/>
            <person name="Hata H."/>
            <person name="Watanabe M."/>
            <person name="Komatsu T."/>
            <person name="Mizushima-Sugano J."/>
            <person name="Satoh T."/>
            <person name="Shirai Y."/>
            <person name="Takahashi Y."/>
            <person name="Nakagawa K."/>
            <person name="Okumura K."/>
            <person name="Nagase T."/>
            <person name="Nomura N."/>
            <person name="Kikuchi H."/>
            <person name="Masuho Y."/>
            <person name="Yamashita R."/>
            <person name="Nakai K."/>
            <person name="Yada T."/>
            <person name="Nakamura Y."/>
            <person name="Ohara O."/>
            <person name="Isogai T."/>
            <person name="Sugano S."/>
        </authorList>
    </citation>
    <scope>NUCLEOTIDE SEQUENCE [LARGE SCALE MRNA] OF 1-114</scope>
</reference>
<reference key="5">
    <citation type="journal article" date="2013" name="J. Physiol. (Lond.)">
        <title>Sprint interval and traditional endurance training increase net intramuscular triglyceride breakdown and expression of perilipin 2 and 5.</title>
        <authorList>
            <person name="Shepherd S.O."/>
            <person name="Cocks M."/>
            <person name="Tipton K.D."/>
            <person name="Ranasinghe A.M."/>
            <person name="Barker T.A."/>
            <person name="Burniston J.G."/>
            <person name="Wagenmakers A.J."/>
            <person name="Shaw C.S."/>
        </authorList>
    </citation>
    <scope>INDUCTION</scope>
</reference>
<reference key="6">
    <citation type="journal article" date="2014" name="J. Proteomics">
        <title>An enzyme assisted RP-RPLC approach for in-depth analysis of human liver phosphoproteome.</title>
        <authorList>
            <person name="Bian Y."/>
            <person name="Song C."/>
            <person name="Cheng K."/>
            <person name="Dong M."/>
            <person name="Wang F."/>
            <person name="Huang J."/>
            <person name="Sun D."/>
            <person name="Wang L."/>
            <person name="Ye M."/>
            <person name="Zou H."/>
        </authorList>
    </citation>
    <scope>PHOSPHORYLATION [LARGE SCALE ANALYSIS] AT SER-322</scope>
    <scope>IDENTIFICATION BY MASS SPECTROMETRY [LARGE SCALE ANALYSIS]</scope>
    <source>
        <tissue>Liver</tissue>
    </source>
</reference>
<keyword id="KW-0963">Cytoplasm</keyword>
<keyword id="KW-0551">Lipid droplet</keyword>
<keyword id="KW-0496">Mitochondrion</keyword>
<keyword id="KW-0597">Phosphoprotein</keyword>
<keyword id="KW-1267">Proteomics identification</keyword>
<keyword id="KW-1185">Reference proteome</keyword>
<sequence>MSEEEAAQIPRSSVWEQDQQNVVQRVVALPLVRATCTAVCDVYSAAKDRHPLLGSACRLAENCVCGLTTRALDHAQPLLEHLQPQLATMNSLACRGLDKLEEKLPFLQQPSETVVTSAKDVVASSVTGVVDLARRGRRWSVELKRSVSHAVDVVLEKSEELVDHFLPMTEEELAALAAEAEGPEVGSVEDQRRQQGYFVRLGSLSARIRHLAYEHSVGKLRQSKHRAQDTLAQLQETLELIDHMQCGVTPTAPACPGKVHELWGEWGQRPPESRRRSQAELETLVLSRSLTQELQGTVEALESSVRGLPAGAQEKVAEVRRSVDALQTAFADARCFRDVPAAALAEGRGRVAHAHACVDELLELVVQAVPLPWLVGPFAPILVERPEPLPDLADLVDEVIGGPDPRWAHLDWPAQQRAWEAEHRDGSGNGDGDRMGVAGDICEQEPETPSCPVKHTLMPELDF</sequence>
<comment type="function">
    <text evidence="1 5">Lipid droplet-associated protein that maintains the balance between lipogenesis and lipolysis and also regulates fatty acid oxidation in oxidative tissues. Recruits mitochondria to the surface of lipid droplets and is involved in lipid droplet homeostasis by regulating both the storage of fatty acids in the form of triglycerides and the release of fatty acids for mitochondrial fatty acid oxidation. In lipid droplet triacylglycerol hydrolysis, plays a role as a scaffolding protein for three major key lipolytic players: ABHD5, PNPLA2 and LIPE. Reduces the triacylglycerol hydrolase activity of PNPLA2 by recruiting and sequestering PNPLA2 to lipid droplets. Phosphorylation by PKA enables lipolysis probably by promoting release of ABHD5 from the perilipin scaffold and by facilitating interaction of ABHD5 with PNPLA2. Also increases lipolysis through interaction with LIPE and upon PKA-mediated phosphorylation of LIPE (By similarity).</text>
</comment>
<comment type="subunit">
    <text evidence="1">Homooligomer. Interacts with PNPLA2; prevents interaction of PNPLA2 with ABHD5. Interacts with ABHD5; targets ABHD5 to lipid droplets and promotes interaction of ABHD5 with PNPLA2. Interacts with LIPE (By similarity).</text>
</comment>
<comment type="interaction">
    <interactant intactId="EBI-21732470">
        <id>Q00G26</id>
    </interactant>
    <interactant intactId="EBI-2813554">
        <id>Q8WTS1</id>
        <label>ABHD5</label>
    </interactant>
    <organismsDiffer>false</organismsDiffer>
    <experiments>3</experiments>
</comment>
<comment type="subcellular location">
    <subcellularLocation>
        <location evidence="5">Lipid droplet</location>
    </subcellularLocation>
    <subcellularLocation>
        <location evidence="3">Cytoplasm</location>
    </subcellularLocation>
    <subcellularLocation>
        <location evidence="2">Mitochondrion</location>
    </subcellularLocation>
    <text evidence="3">Lipid droplet surface-associated. Exchanges between lipid droplets and the cytoplasm.</text>
</comment>
<comment type="tissue specificity">
    <text evidence="5">Expressed in skeletal muscle, liver, heart and kidney.</text>
</comment>
<comment type="induction">
    <text evidence="6">Increased by endurance and sprint interval training.</text>
</comment>
<comment type="PTM">
    <text evidence="1">Phosphorylated by PKA. Phosphorylated on serine in skeletal muscle at rest or upon lipolytic stimulation (By similarity).</text>
</comment>
<comment type="similarity">
    <text evidence="7">Belongs to the perilipin family.</text>
</comment>
<comment type="sequence caution" evidence="7">
    <conflict type="miscellaneous discrepancy">
        <sequence resource="EMBL-CDS" id="BAC87086"/>
    </conflict>
    <text>Probable cloning artifact.</text>
</comment>
<feature type="chain" id="PRO_0000338982" description="Perilipin-5">
    <location>
        <begin position="1"/>
        <end position="463"/>
    </location>
</feature>
<feature type="region of interest" description="Essential for lipid droplet targeting" evidence="1">
    <location>
        <begin position="1"/>
        <end position="173"/>
    </location>
</feature>
<feature type="region of interest" description="Interaction with LIPE" evidence="1">
    <location>
        <begin position="1"/>
        <end position="108"/>
    </location>
</feature>
<feature type="region of interest" description="Interaction with PNPLA2 and ABHD5" evidence="1">
    <location>
        <begin position="185"/>
        <end position="463"/>
    </location>
</feature>
<feature type="region of interest" description="Recruits mitochondria at the lipid droplet surface" evidence="1">
    <location>
        <begin position="444"/>
        <end position="463"/>
    </location>
</feature>
<feature type="modified residue" description="Phosphoserine" evidence="3">
    <location>
        <position position="2"/>
    </location>
</feature>
<feature type="modified residue" description="Phosphoserine" evidence="3">
    <location>
        <position position="148"/>
    </location>
</feature>
<feature type="modified residue" description="Phosphoserine" evidence="8">
    <location>
        <position position="322"/>
    </location>
</feature>
<feature type="sequence variant" id="VAR_043850" description="In dbSNP:rs10407239.">
    <original>A</original>
    <variation>V</variation>
    <location>
        <position position="6"/>
    </location>
</feature>
<feature type="sequence variant" id="VAR_043851" description="In dbSNP:rs1610090." evidence="4 5">
    <original>C</original>
    <variation>R</variation>
    <location>
        <position position="255"/>
    </location>
</feature>
<feature type="sequence variant" id="VAR_043852" description="In dbSNP:rs1062223." evidence="5">
    <original>R</original>
    <variation>W</variation>
    <location>
        <position position="306"/>
    </location>
</feature>
<dbReference type="EMBL" id="DQ839131">
    <property type="protein sequence ID" value="ABH07519.1"/>
    <property type="molecule type" value="mRNA"/>
</dbReference>
<dbReference type="EMBL" id="AC011498">
    <property type="status" value="NOT_ANNOTATED_CDS"/>
    <property type="molecule type" value="mRNA"/>
</dbReference>
<dbReference type="EMBL" id="BC131524">
    <property type="protein sequence ID" value="AAI31525.1"/>
    <property type="molecule type" value="mRNA"/>
</dbReference>
<dbReference type="EMBL" id="AK127689">
    <property type="protein sequence ID" value="BAC87086.1"/>
    <property type="status" value="ALT_SEQ"/>
    <property type="molecule type" value="mRNA"/>
</dbReference>
<dbReference type="CCDS" id="CCDS42473.1"/>
<dbReference type="RefSeq" id="NP_001013728.2">
    <property type="nucleotide sequence ID" value="NM_001013706.3"/>
</dbReference>
<dbReference type="SMR" id="Q00G26"/>
<dbReference type="BioGRID" id="136635">
    <property type="interactions" value="13"/>
</dbReference>
<dbReference type="FunCoup" id="Q00G26">
    <property type="interactions" value="618"/>
</dbReference>
<dbReference type="IntAct" id="Q00G26">
    <property type="interactions" value="7"/>
</dbReference>
<dbReference type="STRING" id="9606.ENSP00000371272"/>
<dbReference type="BindingDB" id="Q00G26"/>
<dbReference type="GlyGen" id="Q00G26">
    <property type="glycosylation" value="2 sites, 1 O-linked glycan (1 site)"/>
</dbReference>
<dbReference type="iPTMnet" id="Q00G26"/>
<dbReference type="PhosphoSitePlus" id="Q00G26"/>
<dbReference type="BioMuta" id="PLIN5"/>
<dbReference type="DMDM" id="292495026"/>
<dbReference type="jPOST" id="Q00G26"/>
<dbReference type="MassIVE" id="Q00G26"/>
<dbReference type="PaxDb" id="9606-ENSP00000371272"/>
<dbReference type="PeptideAtlas" id="Q00G26"/>
<dbReference type="ProteomicsDB" id="57901"/>
<dbReference type="Antibodypedia" id="23670">
    <property type="antibodies" value="177 antibodies from 16 providers"/>
</dbReference>
<dbReference type="DNASU" id="440503"/>
<dbReference type="Ensembl" id="ENST00000381848.7">
    <property type="protein sequence ID" value="ENSP00000371272.2"/>
    <property type="gene ID" value="ENSG00000214456.8"/>
</dbReference>
<dbReference type="GeneID" id="440503"/>
<dbReference type="KEGG" id="hsa:440503"/>
<dbReference type="MANE-Select" id="ENST00000381848.7">
    <property type="protein sequence ID" value="ENSP00000371272.2"/>
    <property type="RefSeq nucleotide sequence ID" value="NM_001013706.3"/>
    <property type="RefSeq protein sequence ID" value="NP_001013728.2"/>
</dbReference>
<dbReference type="UCSC" id="uc002mas.5">
    <property type="organism name" value="human"/>
</dbReference>
<dbReference type="AGR" id="HGNC:33196"/>
<dbReference type="CTD" id="440503"/>
<dbReference type="DisGeNET" id="440503"/>
<dbReference type="GeneCards" id="PLIN5"/>
<dbReference type="HGNC" id="HGNC:33196">
    <property type="gene designation" value="PLIN5"/>
</dbReference>
<dbReference type="HPA" id="ENSG00000214456">
    <property type="expression patterns" value="Tissue enhanced (liver, skeletal muscle)"/>
</dbReference>
<dbReference type="MIM" id="613248">
    <property type="type" value="gene"/>
</dbReference>
<dbReference type="neXtProt" id="NX_Q00G26"/>
<dbReference type="OpenTargets" id="ENSG00000214456"/>
<dbReference type="PharmGKB" id="PA165394043"/>
<dbReference type="VEuPathDB" id="HostDB:ENSG00000214456"/>
<dbReference type="eggNOG" id="KOG4790">
    <property type="taxonomic scope" value="Eukaryota"/>
</dbReference>
<dbReference type="GeneTree" id="ENSGT00950000182920"/>
<dbReference type="HOGENOM" id="CLU_035133_1_0_1"/>
<dbReference type="InParanoid" id="Q00G26"/>
<dbReference type="OMA" id="GQCNPKT"/>
<dbReference type="OrthoDB" id="376826at2759"/>
<dbReference type="PAN-GO" id="Q00G26">
    <property type="GO annotations" value="4 GO annotations based on evolutionary models"/>
</dbReference>
<dbReference type="PhylomeDB" id="Q00G26"/>
<dbReference type="TreeFam" id="TF328397"/>
<dbReference type="PathwayCommons" id="Q00G26"/>
<dbReference type="SignaLink" id="Q00G26"/>
<dbReference type="BioGRID-ORCS" id="440503">
    <property type="hits" value="12 hits in 1150 CRISPR screens"/>
</dbReference>
<dbReference type="ChiTaRS" id="PLIN5">
    <property type="organism name" value="human"/>
</dbReference>
<dbReference type="GenomeRNAi" id="440503"/>
<dbReference type="Pharos" id="Q00G26">
    <property type="development level" value="Tbio"/>
</dbReference>
<dbReference type="PRO" id="PR:Q00G26"/>
<dbReference type="Proteomes" id="UP000005640">
    <property type="component" value="Chromosome 19"/>
</dbReference>
<dbReference type="RNAct" id="Q00G26">
    <property type="molecule type" value="protein"/>
</dbReference>
<dbReference type="Bgee" id="ENSG00000214456">
    <property type="expression patterns" value="Expressed in right lobe of liver and 171 other cell types or tissues"/>
</dbReference>
<dbReference type="ExpressionAtlas" id="Q00G26">
    <property type="expression patterns" value="baseline and differential"/>
</dbReference>
<dbReference type="GO" id="GO:0005737">
    <property type="term" value="C:cytoplasm"/>
    <property type="evidence" value="ECO:0000250"/>
    <property type="project" value="UniProtKB"/>
</dbReference>
<dbReference type="GO" id="GO:0005829">
    <property type="term" value="C:cytosol"/>
    <property type="evidence" value="ECO:0000318"/>
    <property type="project" value="GO_Central"/>
</dbReference>
<dbReference type="GO" id="GO:0043231">
    <property type="term" value="C:intracellular membrane-bounded organelle"/>
    <property type="evidence" value="ECO:0000314"/>
    <property type="project" value="HPA"/>
</dbReference>
<dbReference type="GO" id="GO:0005811">
    <property type="term" value="C:lipid droplet"/>
    <property type="evidence" value="ECO:0000314"/>
    <property type="project" value="HPA"/>
</dbReference>
<dbReference type="GO" id="GO:0005739">
    <property type="term" value="C:mitochondrion"/>
    <property type="evidence" value="ECO:0000250"/>
    <property type="project" value="UniProtKB"/>
</dbReference>
<dbReference type="GO" id="GO:0042802">
    <property type="term" value="F:identical protein binding"/>
    <property type="evidence" value="ECO:0007669"/>
    <property type="project" value="Ensembl"/>
</dbReference>
<dbReference type="GO" id="GO:0035473">
    <property type="term" value="F:lipase binding"/>
    <property type="evidence" value="ECO:0007669"/>
    <property type="project" value="Ensembl"/>
</dbReference>
<dbReference type="GO" id="GO:0034389">
    <property type="term" value="P:lipid droplet organization"/>
    <property type="evidence" value="ECO:0000250"/>
    <property type="project" value="UniProtKB"/>
</dbReference>
<dbReference type="GO" id="GO:0019915">
    <property type="term" value="P:lipid storage"/>
    <property type="evidence" value="ECO:0000318"/>
    <property type="project" value="GO_Central"/>
</dbReference>
<dbReference type="GO" id="GO:0051646">
    <property type="term" value="P:mitochondrion localization"/>
    <property type="evidence" value="ECO:0007669"/>
    <property type="project" value="Ensembl"/>
</dbReference>
<dbReference type="GO" id="GO:0031999">
    <property type="term" value="P:negative regulation of fatty acid beta-oxidation"/>
    <property type="evidence" value="ECO:0000250"/>
    <property type="project" value="UniProtKB"/>
</dbReference>
<dbReference type="GO" id="GO:0060192">
    <property type="term" value="P:negative regulation of lipase activity"/>
    <property type="evidence" value="ECO:0000250"/>
    <property type="project" value="UniProtKB"/>
</dbReference>
<dbReference type="GO" id="GO:0035359">
    <property type="term" value="P:negative regulation of peroxisome proliferator activated receptor signaling pathway"/>
    <property type="evidence" value="ECO:0000250"/>
    <property type="project" value="UniProtKB"/>
</dbReference>
<dbReference type="GO" id="GO:2000378">
    <property type="term" value="P:negative regulation of reactive oxygen species metabolic process"/>
    <property type="evidence" value="ECO:0000250"/>
    <property type="project" value="UniProtKB"/>
</dbReference>
<dbReference type="GO" id="GO:0010897">
    <property type="term" value="P:negative regulation of triglyceride catabolic process"/>
    <property type="evidence" value="ECO:0000250"/>
    <property type="project" value="UniProtKB"/>
</dbReference>
<dbReference type="GO" id="GO:0032000">
    <property type="term" value="P:positive regulation of fatty acid beta-oxidation"/>
    <property type="evidence" value="ECO:0000250"/>
    <property type="project" value="UniProtKB"/>
</dbReference>
<dbReference type="GO" id="GO:0060193">
    <property type="term" value="P:positive regulation of lipase activity"/>
    <property type="evidence" value="ECO:0000250"/>
    <property type="project" value="UniProtKB"/>
</dbReference>
<dbReference type="GO" id="GO:0010884">
    <property type="term" value="P:positive regulation of lipid storage"/>
    <property type="evidence" value="ECO:0000250"/>
    <property type="project" value="UniProtKB"/>
</dbReference>
<dbReference type="GO" id="GO:0010867">
    <property type="term" value="P:positive regulation of triglyceride biosynthetic process"/>
    <property type="evidence" value="ECO:0000250"/>
    <property type="project" value="UniProtKB"/>
</dbReference>
<dbReference type="GO" id="GO:0010890">
    <property type="term" value="P:positive regulation of triglyceride storage"/>
    <property type="evidence" value="ECO:0000250"/>
    <property type="project" value="UniProtKB"/>
</dbReference>
<dbReference type="FunFam" id="1.20.120.340:FF:000004">
    <property type="entry name" value="Perilipin"/>
    <property type="match status" value="1"/>
</dbReference>
<dbReference type="Gene3D" id="1.20.120.340">
    <property type="entry name" value="Flagellar protein FliS"/>
    <property type="match status" value="1"/>
</dbReference>
<dbReference type="Gene3D" id="3.30.720.170">
    <property type="entry name" value="Perilipin, alpha-beta domain"/>
    <property type="match status" value="1"/>
</dbReference>
<dbReference type="InterPro" id="IPR004279">
    <property type="entry name" value="Perilipin"/>
</dbReference>
<dbReference type="PANTHER" id="PTHR14024">
    <property type="entry name" value="PERILIPIN"/>
    <property type="match status" value="1"/>
</dbReference>
<dbReference type="PANTHER" id="PTHR14024:SF9">
    <property type="entry name" value="PERILIPIN-5"/>
    <property type="match status" value="1"/>
</dbReference>
<dbReference type="Pfam" id="PF03036">
    <property type="entry name" value="Perilipin"/>
    <property type="match status" value="1"/>
</dbReference>
<dbReference type="PIRSF" id="PIRSF036881">
    <property type="entry name" value="PAT"/>
    <property type="match status" value="1"/>
</dbReference>
<dbReference type="SUPFAM" id="SSF109775">
    <property type="entry name" value="Mannose-6-phosphate receptor binding protein 1 (Tip47), C-terminal domain"/>
    <property type="match status" value="1"/>
</dbReference>
<proteinExistence type="evidence at protein level"/>
<gene>
    <name type="primary">PLIN5</name>
    <name type="synonym">LSDP5</name>
    <name type="synonym">OXPAT</name>
    <name type="synonym">PAT-1</name>
</gene>
<evidence type="ECO:0000250" key="1"/>
<evidence type="ECO:0000250" key="2">
    <source>
        <dbReference type="UniProtKB" id="M0R7Z9"/>
    </source>
</evidence>
<evidence type="ECO:0000250" key="3">
    <source>
        <dbReference type="UniProtKB" id="Q8BVZ1"/>
    </source>
</evidence>
<evidence type="ECO:0000269" key="4">
    <source>
    </source>
</evidence>
<evidence type="ECO:0000269" key="5">
    <source>
    </source>
</evidence>
<evidence type="ECO:0000269" key="6">
    <source>
    </source>
</evidence>
<evidence type="ECO:0000305" key="7"/>
<evidence type="ECO:0007744" key="8">
    <source>
    </source>
</evidence>
<protein>
    <recommendedName>
        <fullName>Perilipin-5</fullName>
    </recommendedName>
    <alternativeName>
        <fullName>Lipid storage droplet protein 5</fullName>
    </alternativeName>
</protein>
<name>PLIN5_HUMAN</name>
<accession>Q00G26</accession>
<accession>A2RRC1</accession>
<accession>Q6ZS68</accession>